<comment type="function">
    <text evidence="1">Tetrapolymerization of the monopyrrole PBG into the hydroxymethylbilane pre-uroporphyrinogen in several discrete steps.</text>
</comment>
<comment type="catalytic activity">
    <reaction evidence="1">
        <text>4 porphobilinogen + H2O = hydroxymethylbilane + 4 NH4(+)</text>
        <dbReference type="Rhea" id="RHEA:13185"/>
        <dbReference type="ChEBI" id="CHEBI:15377"/>
        <dbReference type="ChEBI" id="CHEBI:28938"/>
        <dbReference type="ChEBI" id="CHEBI:57845"/>
        <dbReference type="ChEBI" id="CHEBI:58126"/>
        <dbReference type="EC" id="2.5.1.61"/>
    </reaction>
</comment>
<comment type="cofactor">
    <cofactor evidence="1">
        <name>dipyrromethane</name>
        <dbReference type="ChEBI" id="CHEBI:60342"/>
    </cofactor>
    <text evidence="1">Binds 1 dipyrromethane group covalently.</text>
</comment>
<comment type="pathway">
    <text evidence="1">Porphyrin-containing compound metabolism; protoporphyrin-IX biosynthesis; coproporphyrinogen-III from 5-aminolevulinate: step 2/4.</text>
</comment>
<comment type="subunit">
    <text evidence="1">Monomer.</text>
</comment>
<comment type="miscellaneous">
    <text evidence="1">The porphobilinogen subunits are added to the dipyrromethane group.</text>
</comment>
<comment type="similarity">
    <text evidence="1">Belongs to the HMBS family.</text>
</comment>
<organism>
    <name type="scientific">Desulforudis audaxviator (strain MP104C)</name>
    <dbReference type="NCBI Taxonomy" id="477974"/>
    <lineage>
        <taxon>Bacteria</taxon>
        <taxon>Bacillati</taxon>
        <taxon>Bacillota</taxon>
        <taxon>Clostridia</taxon>
        <taxon>Thermoanaerobacterales</taxon>
        <taxon>Candidatus Desulforudaceae</taxon>
        <taxon>Candidatus Desulforudis</taxon>
    </lineage>
</organism>
<dbReference type="EC" id="2.5.1.61" evidence="1"/>
<dbReference type="EMBL" id="CP000860">
    <property type="protein sequence ID" value="ACA59856.1"/>
    <property type="molecule type" value="Genomic_DNA"/>
</dbReference>
<dbReference type="RefSeq" id="WP_012302441.1">
    <property type="nucleotide sequence ID" value="NC_010424.1"/>
</dbReference>
<dbReference type="SMR" id="B1I4L8"/>
<dbReference type="STRING" id="477974.Daud_1347"/>
<dbReference type="KEGG" id="dau:Daud_1347"/>
<dbReference type="eggNOG" id="COG0181">
    <property type="taxonomic scope" value="Bacteria"/>
</dbReference>
<dbReference type="HOGENOM" id="CLU_019704_0_2_9"/>
<dbReference type="OrthoDB" id="9810298at2"/>
<dbReference type="UniPathway" id="UPA00251">
    <property type="reaction ID" value="UER00319"/>
</dbReference>
<dbReference type="Proteomes" id="UP000008544">
    <property type="component" value="Chromosome"/>
</dbReference>
<dbReference type="GO" id="GO:0005737">
    <property type="term" value="C:cytoplasm"/>
    <property type="evidence" value="ECO:0007669"/>
    <property type="project" value="TreeGrafter"/>
</dbReference>
<dbReference type="GO" id="GO:0004418">
    <property type="term" value="F:hydroxymethylbilane synthase activity"/>
    <property type="evidence" value="ECO:0007669"/>
    <property type="project" value="UniProtKB-UniRule"/>
</dbReference>
<dbReference type="GO" id="GO:0006782">
    <property type="term" value="P:protoporphyrinogen IX biosynthetic process"/>
    <property type="evidence" value="ECO:0007669"/>
    <property type="project" value="UniProtKB-UniRule"/>
</dbReference>
<dbReference type="CDD" id="cd13646">
    <property type="entry name" value="PBP2_EcHMBS_like"/>
    <property type="match status" value="1"/>
</dbReference>
<dbReference type="FunFam" id="3.30.160.40:FF:000002">
    <property type="entry name" value="Porphobilinogen deaminase"/>
    <property type="match status" value="1"/>
</dbReference>
<dbReference type="FunFam" id="3.40.190.10:FF:000004">
    <property type="entry name" value="Porphobilinogen deaminase"/>
    <property type="match status" value="1"/>
</dbReference>
<dbReference type="FunFam" id="3.40.190.10:FF:000005">
    <property type="entry name" value="Porphobilinogen deaminase"/>
    <property type="match status" value="1"/>
</dbReference>
<dbReference type="Gene3D" id="3.40.190.10">
    <property type="entry name" value="Periplasmic binding protein-like II"/>
    <property type="match status" value="2"/>
</dbReference>
<dbReference type="Gene3D" id="3.30.160.40">
    <property type="entry name" value="Porphobilinogen deaminase, C-terminal domain"/>
    <property type="match status" value="1"/>
</dbReference>
<dbReference type="HAMAP" id="MF_00260">
    <property type="entry name" value="Porphobil_deam"/>
    <property type="match status" value="1"/>
</dbReference>
<dbReference type="InterPro" id="IPR000860">
    <property type="entry name" value="HemC"/>
</dbReference>
<dbReference type="InterPro" id="IPR022419">
    <property type="entry name" value="Porphobilin_deaminase_cofac_BS"/>
</dbReference>
<dbReference type="InterPro" id="IPR022417">
    <property type="entry name" value="Porphobilin_deaminase_N"/>
</dbReference>
<dbReference type="InterPro" id="IPR022418">
    <property type="entry name" value="Porphobilinogen_deaminase_C"/>
</dbReference>
<dbReference type="InterPro" id="IPR036803">
    <property type="entry name" value="Porphobilinogen_deaminase_C_sf"/>
</dbReference>
<dbReference type="NCBIfam" id="TIGR00212">
    <property type="entry name" value="hemC"/>
    <property type="match status" value="1"/>
</dbReference>
<dbReference type="PANTHER" id="PTHR11557">
    <property type="entry name" value="PORPHOBILINOGEN DEAMINASE"/>
    <property type="match status" value="1"/>
</dbReference>
<dbReference type="PANTHER" id="PTHR11557:SF0">
    <property type="entry name" value="PORPHOBILINOGEN DEAMINASE"/>
    <property type="match status" value="1"/>
</dbReference>
<dbReference type="Pfam" id="PF01379">
    <property type="entry name" value="Porphobil_deam"/>
    <property type="match status" value="1"/>
</dbReference>
<dbReference type="Pfam" id="PF03900">
    <property type="entry name" value="Porphobil_deamC"/>
    <property type="match status" value="1"/>
</dbReference>
<dbReference type="PIRSF" id="PIRSF001438">
    <property type="entry name" value="4pyrrol_synth_OHMeBilane_synth"/>
    <property type="match status" value="1"/>
</dbReference>
<dbReference type="PRINTS" id="PR00151">
    <property type="entry name" value="PORPHBDMNASE"/>
</dbReference>
<dbReference type="SUPFAM" id="SSF53850">
    <property type="entry name" value="Periplasmic binding protein-like II"/>
    <property type="match status" value="1"/>
</dbReference>
<dbReference type="SUPFAM" id="SSF54782">
    <property type="entry name" value="Porphobilinogen deaminase (hydroxymethylbilane synthase), C-terminal domain"/>
    <property type="match status" value="1"/>
</dbReference>
<dbReference type="PROSITE" id="PS00533">
    <property type="entry name" value="PORPHOBILINOGEN_DEAM"/>
    <property type="match status" value="1"/>
</dbReference>
<evidence type="ECO:0000255" key="1">
    <source>
        <dbReference type="HAMAP-Rule" id="MF_00260"/>
    </source>
</evidence>
<proteinExistence type="inferred from homology"/>
<keyword id="KW-0627">Porphyrin biosynthesis</keyword>
<keyword id="KW-1185">Reference proteome</keyword>
<keyword id="KW-0808">Transferase</keyword>
<sequence>MRREVVVGTRGSRLALAQADWVIDHLRARYPRVSFVRKEIRTTGDNILEVALAKIGDKGLFTKELEQALLHREIDLAVHSMKDLPTGLPEGLVIGAVSVREYPGDVFISRGGERLEELPAGAVLGTSSLRRTAQLLAYRPDLQVIPVRGNVQTRLRKLDEGVVDALVLAWAGLFRLGLTERVTHRIPVAMCLPAVGQGALGIEARADDAEILEMLRTIDHAPTRAAVQAERTLLRRLEGGCQVPVGALGRFRDGRLVLEAVVASLDGTELVRAQESGPADRPEALGNSLAVRLLEMGAGEILARVRAGA</sequence>
<accession>B1I4L8</accession>
<feature type="chain" id="PRO_1000114148" description="Porphobilinogen deaminase">
    <location>
        <begin position="1"/>
        <end position="309"/>
    </location>
</feature>
<feature type="modified residue" description="S-(dipyrrolylmethanemethyl)cysteine" evidence="1">
    <location>
        <position position="241"/>
    </location>
</feature>
<protein>
    <recommendedName>
        <fullName evidence="1">Porphobilinogen deaminase</fullName>
        <shortName evidence="1">PBG</shortName>
        <ecNumber evidence="1">2.5.1.61</ecNumber>
    </recommendedName>
    <alternativeName>
        <fullName evidence="1">Hydroxymethylbilane synthase</fullName>
        <shortName evidence="1">HMBS</shortName>
    </alternativeName>
    <alternativeName>
        <fullName evidence="1">Pre-uroporphyrinogen synthase</fullName>
    </alternativeName>
</protein>
<reference key="1">
    <citation type="submission" date="2007-10" db="EMBL/GenBank/DDBJ databases">
        <title>Complete sequence of chromosome of Desulforudis audaxviator MP104C.</title>
        <authorList>
            <person name="Copeland A."/>
            <person name="Lucas S."/>
            <person name="Lapidus A."/>
            <person name="Barry K."/>
            <person name="Glavina del Rio T."/>
            <person name="Dalin E."/>
            <person name="Tice H."/>
            <person name="Bruce D."/>
            <person name="Pitluck S."/>
            <person name="Lowry S.R."/>
            <person name="Larimer F."/>
            <person name="Land M.L."/>
            <person name="Hauser L."/>
            <person name="Kyrpides N."/>
            <person name="Ivanova N.N."/>
            <person name="Richardson P."/>
        </authorList>
    </citation>
    <scope>NUCLEOTIDE SEQUENCE [LARGE SCALE GENOMIC DNA]</scope>
    <source>
        <strain>MP104C</strain>
    </source>
</reference>
<gene>
    <name evidence="1" type="primary">hemC</name>
    <name type="ordered locus">Daud_1347</name>
</gene>
<name>HEM3_DESAP</name>